<organism>
    <name type="scientific">Gallus gallus</name>
    <name type="common">Chicken</name>
    <dbReference type="NCBI Taxonomy" id="9031"/>
    <lineage>
        <taxon>Eukaryota</taxon>
        <taxon>Metazoa</taxon>
        <taxon>Chordata</taxon>
        <taxon>Craniata</taxon>
        <taxon>Vertebrata</taxon>
        <taxon>Euteleostomi</taxon>
        <taxon>Archelosauria</taxon>
        <taxon>Archosauria</taxon>
        <taxon>Dinosauria</taxon>
        <taxon>Saurischia</taxon>
        <taxon>Theropoda</taxon>
        <taxon>Coelurosauria</taxon>
        <taxon>Aves</taxon>
        <taxon>Neognathae</taxon>
        <taxon>Galloanserae</taxon>
        <taxon>Galliformes</taxon>
        <taxon>Phasianidae</taxon>
        <taxon>Phasianinae</taxon>
        <taxon>Gallus</taxon>
    </lineage>
</organism>
<feature type="chain" id="PRO_0000438549" description="DNA polymerase delta subunit 3">
    <location>
        <begin position="1"/>
        <end position="461"/>
    </location>
</feature>
<feature type="region of interest" description="Disordered" evidence="2">
    <location>
        <begin position="148"/>
        <end position="229"/>
    </location>
</feature>
<feature type="region of interest" description="Disordered" evidence="2">
    <location>
        <begin position="249"/>
        <end position="380"/>
    </location>
</feature>
<feature type="region of interest" description="Disordered" evidence="2">
    <location>
        <begin position="399"/>
        <end position="461"/>
    </location>
</feature>
<feature type="short sequence motif" description="PIP-box" evidence="1">
    <location>
        <begin position="451"/>
        <end position="458"/>
    </location>
</feature>
<feature type="compositionally biased region" description="Polar residues" evidence="2">
    <location>
        <begin position="155"/>
        <end position="172"/>
    </location>
</feature>
<feature type="compositionally biased region" description="Basic and acidic residues" evidence="2">
    <location>
        <begin position="205"/>
        <end position="214"/>
    </location>
</feature>
<feature type="compositionally biased region" description="Low complexity" evidence="2">
    <location>
        <begin position="215"/>
        <end position="228"/>
    </location>
</feature>
<feature type="compositionally biased region" description="Basic and acidic residues" evidence="2">
    <location>
        <begin position="279"/>
        <end position="304"/>
    </location>
</feature>
<feature type="compositionally biased region" description="Basic residues" evidence="2">
    <location>
        <begin position="371"/>
        <end position="380"/>
    </location>
</feature>
<feature type="compositionally biased region" description="Basic and acidic residues" evidence="2">
    <location>
        <begin position="427"/>
        <end position="436"/>
    </location>
</feature>
<feature type="sequence conflict" description="In Ref. 1; CAG31915." ref="1">
    <original>T</original>
    <variation>S</variation>
    <location>
        <position position="275"/>
    </location>
</feature>
<feature type="sequence conflict" description="In Ref. 1; CAG31915." ref="1">
    <original>A</original>
    <variation>T</variation>
    <location>
        <position position="287"/>
    </location>
</feature>
<feature type="sequence conflict" description="In Ref. 1; CAG31915." ref="1">
    <original>L</original>
    <variation>P</variation>
    <location>
        <position position="336"/>
    </location>
</feature>
<gene>
    <name type="primary">POLD3</name>
    <name type="ORF">RCJMB04_13j10</name>
</gene>
<reference key="1">
    <citation type="journal article" date="2005" name="Genome Biol.">
        <title>Full-length cDNAs from chicken bursal lymphocytes to facilitate gene function analysis.</title>
        <authorList>
            <person name="Caldwell R.B."/>
            <person name="Kierzek A.M."/>
            <person name="Arakawa H."/>
            <person name="Bezzubov Y."/>
            <person name="Zaim J."/>
            <person name="Fiedler P."/>
            <person name="Kutter S."/>
            <person name="Blagodatski A."/>
            <person name="Kostovska D."/>
            <person name="Koter M."/>
            <person name="Plachy J."/>
            <person name="Carninci P."/>
            <person name="Hayashizaki Y."/>
            <person name="Buerstedde J.-M."/>
        </authorList>
    </citation>
    <scope>NUCLEOTIDE SEQUENCE [LARGE SCALE MRNA]</scope>
    <source>
        <strain>CB</strain>
        <tissue>Bursa of Fabricius</tissue>
    </source>
</reference>
<reference key="2">
    <citation type="journal article" date="2004" name="Nature">
        <title>Sequence and comparative analysis of the chicken genome provide unique perspectives on vertebrate evolution.</title>
        <authorList>
            <person name="Hillier L.W."/>
            <person name="Miller W."/>
            <person name="Birney E."/>
            <person name="Warren W."/>
            <person name="Hardison R.C."/>
            <person name="Ponting C.P."/>
            <person name="Bork P."/>
            <person name="Burt D.W."/>
            <person name="Groenen M.A.M."/>
            <person name="Delany M.E."/>
            <person name="Dodgson J.B."/>
            <person name="Chinwalla A.T."/>
            <person name="Cliften P.F."/>
            <person name="Clifton S.W."/>
            <person name="Delehaunty K.D."/>
            <person name="Fronick C."/>
            <person name="Fulton R.S."/>
            <person name="Graves T.A."/>
            <person name="Kremitzki C."/>
            <person name="Layman D."/>
            <person name="Magrini V."/>
            <person name="McPherson J.D."/>
            <person name="Miner T.L."/>
            <person name="Minx P."/>
            <person name="Nash W.E."/>
            <person name="Nhan M.N."/>
            <person name="Nelson J.O."/>
            <person name="Oddy L.G."/>
            <person name="Pohl C.S."/>
            <person name="Randall-Maher J."/>
            <person name="Smith S.M."/>
            <person name="Wallis J.W."/>
            <person name="Yang S.-P."/>
            <person name="Romanov M.N."/>
            <person name="Rondelli C.M."/>
            <person name="Paton B."/>
            <person name="Smith J."/>
            <person name="Morrice D."/>
            <person name="Daniels L."/>
            <person name="Tempest H.G."/>
            <person name="Robertson L."/>
            <person name="Masabanda J.S."/>
            <person name="Griffin D.K."/>
            <person name="Vignal A."/>
            <person name="Fillon V."/>
            <person name="Jacobbson L."/>
            <person name="Kerje S."/>
            <person name="Andersson L."/>
            <person name="Crooijmans R.P."/>
            <person name="Aerts J."/>
            <person name="van der Poel J.J."/>
            <person name="Ellegren H."/>
            <person name="Caldwell R.B."/>
            <person name="Hubbard S.J."/>
            <person name="Grafham D.V."/>
            <person name="Kierzek A.M."/>
            <person name="McLaren S.R."/>
            <person name="Overton I.M."/>
            <person name="Arakawa H."/>
            <person name="Beattie K.J."/>
            <person name="Bezzubov Y."/>
            <person name="Boardman P.E."/>
            <person name="Bonfield J.K."/>
            <person name="Croning M.D.R."/>
            <person name="Davies R.M."/>
            <person name="Francis M.D."/>
            <person name="Humphray S.J."/>
            <person name="Scott C.E."/>
            <person name="Taylor R.G."/>
            <person name="Tickle C."/>
            <person name="Brown W.R.A."/>
            <person name="Rogers J."/>
            <person name="Buerstedde J.-M."/>
            <person name="Wilson S.A."/>
            <person name="Stubbs L."/>
            <person name="Ovcharenko I."/>
            <person name="Gordon L."/>
            <person name="Lucas S."/>
            <person name="Miller M.M."/>
            <person name="Inoko H."/>
            <person name="Shiina T."/>
            <person name="Kaufman J."/>
            <person name="Salomonsen J."/>
            <person name="Skjoedt K."/>
            <person name="Wong G.K.-S."/>
            <person name="Wang J."/>
            <person name="Liu B."/>
            <person name="Wang J."/>
            <person name="Yu J."/>
            <person name="Yang H."/>
            <person name="Nefedov M."/>
            <person name="Koriabine M."/>
            <person name="Dejong P.J."/>
            <person name="Goodstadt L."/>
            <person name="Webber C."/>
            <person name="Dickens N.J."/>
            <person name="Letunic I."/>
            <person name="Suyama M."/>
            <person name="Torrents D."/>
            <person name="von Mering C."/>
            <person name="Zdobnov E.M."/>
            <person name="Makova K."/>
            <person name="Nekrutenko A."/>
            <person name="Elnitski L."/>
            <person name="Eswara P."/>
            <person name="King D.C."/>
            <person name="Yang S.-P."/>
            <person name="Tyekucheva S."/>
            <person name="Radakrishnan A."/>
            <person name="Harris R.S."/>
            <person name="Chiaromonte F."/>
            <person name="Taylor J."/>
            <person name="He J."/>
            <person name="Rijnkels M."/>
            <person name="Griffiths-Jones S."/>
            <person name="Ureta-Vidal A."/>
            <person name="Hoffman M.M."/>
            <person name="Severin J."/>
            <person name="Searle S.M.J."/>
            <person name="Law A.S."/>
            <person name="Speed D."/>
            <person name="Waddington D."/>
            <person name="Cheng Z."/>
            <person name="Tuzun E."/>
            <person name="Eichler E."/>
            <person name="Bao Z."/>
            <person name="Flicek P."/>
            <person name="Shteynberg D.D."/>
            <person name="Brent M.R."/>
            <person name="Bye J.M."/>
            <person name="Huckle E.J."/>
            <person name="Chatterji S."/>
            <person name="Dewey C."/>
            <person name="Pachter L."/>
            <person name="Kouranov A."/>
            <person name="Mourelatos Z."/>
            <person name="Hatzigeorgiou A.G."/>
            <person name="Paterson A.H."/>
            <person name="Ivarie R."/>
            <person name="Brandstrom M."/>
            <person name="Axelsson E."/>
            <person name="Backstrom N."/>
            <person name="Berlin S."/>
            <person name="Webster M.T."/>
            <person name="Pourquie O."/>
            <person name="Reymond A."/>
            <person name="Ucla C."/>
            <person name="Antonarakis S.E."/>
            <person name="Long M."/>
            <person name="Emerson J.J."/>
            <person name="Betran E."/>
            <person name="Dupanloup I."/>
            <person name="Kaessmann H."/>
            <person name="Hinrichs A.S."/>
            <person name="Bejerano G."/>
            <person name="Furey T.S."/>
            <person name="Harte R.A."/>
            <person name="Raney B."/>
            <person name="Siepel A."/>
            <person name="Kent W.J."/>
            <person name="Haussler D."/>
            <person name="Eyras E."/>
            <person name="Castelo R."/>
            <person name="Abril J.F."/>
            <person name="Castellano S."/>
            <person name="Camara F."/>
            <person name="Parra G."/>
            <person name="Guigo R."/>
            <person name="Bourque G."/>
            <person name="Tesler G."/>
            <person name="Pevzner P.A."/>
            <person name="Smit A."/>
            <person name="Fulton L.A."/>
            <person name="Mardis E.R."/>
            <person name="Wilson R.K."/>
        </authorList>
    </citation>
    <scope>NUCLEOTIDE SEQUENCE [LARGE SCALE GENOMIC DNA]</scope>
    <source>
        <strain>Red jungle fowl</strain>
    </source>
</reference>
<reference key="3">
    <citation type="journal article" date="2015" name="Nucleic Acids Res.">
        <title>The POLD3 subunit of DNA polymerase delta can promote translesion synthesis independently of DNA polymerase zeta.</title>
        <authorList>
            <person name="Hirota K."/>
            <person name="Yoshikiyo K."/>
            <person name="Guilbaud G."/>
            <person name="Tsurimoto T."/>
            <person name="Murai J."/>
            <person name="Tsuda M."/>
            <person name="Phillips L.G."/>
            <person name="Narita T."/>
            <person name="Nishihara K."/>
            <person name="Kobayashi K."/>
            <person name="Yamada K."/>
            <person name="Nakamura J."/>
            <person name="Pommier Y."/>
            <person name="Lehmann A."/>
            <person name="Sale J.E."/>
            <person name="Takeda S."/>
        </authorList>
    </citation>
    <scope>FUNCTION IN TRANSLESION SYNTHESIS</scope>
</reference>
<reference key="4">
    <citation type="journal article" date="2016" name="Nucleic Acids Res.">
        <title>In vivo evidence for translesion synthesis by the replicative DNA polymerase delta.</title>
        <authorList>
            <person name="Hirota K."/>
            <person name="Tsuda M."/>
            <person name="Mohiuddin M."/>
            <person name="Tsurimoto T."/>
            <person name="Cohen I.S."/>
            <person name="Livneh Z."/>
            <person name="Kobayashi K."/>
            <person name="Narita T."/>
            <person name="Nishihara K."/>
            <person name="Murai J."/>
            <person name="Iwai S."/>
            <person name="Guilbaud G."/>
            <person name="Sale J.E."/>
            <person name="Takeda S."/>
        </authorList>
    </citation>
    <scope>FUNCTION IN TRANSLESION SYNTHESIS</scope>
</reference>
<protein>
    <recommendedName>
        <fullName>DNA polymerase delta subunit 3</fullName>
    </recommendedName>
    <alternativeName>
        <fullName>DNA polymerase delta subunit p66</fullName>
    </alternativeName>
</protein>
<sequence>MEDELYLENIDEFVTDQNRIVTYKWLSYTLGVHVNQAKQMLYDYVERKRKENSGAQLHVTYLVAGNLIQNGHTCHKVAVVREDKLEAMKSKLATVTSVHVYSIQKALLKDSGPLYNTDYDIIKANLHNCSKFSAIRCADAVPRTPAEVAQARTLARSSSQTPSDTSAVSTPPLNGHGPTAAKQSSQPPKGIMGMFAAKAASKAQDANKEPKAKEAPSVSAASSKPSAKGNIMNNFFGKAAMNKLKVNSVPGQPKEEKEAVKTSVPATEPESSPNTIVEKPGRKTEPAKIQQKDKKSKMKRMDKSDNEEEREPENQKKKRKRIKQLESDSSDEEDVLASPTLEEEKAPSPPPLVPALKAELEPASTEASAGGKKRKRKRVLKSKMFVDEEEGCMVTEKVYESESCTDSEDDFAKTKPPAVPKQPALPVKKEPKEERKNQKKGAATASRANKQISIMGFCQKK</sequence>
<proteinExistence type="evidence at protein level"/>
<keyword id="KW-0963">Cytoplasm</keyword>
<keyword id="KW-0227">DNA damage</keyword>
<keyword id="KW-0228">DNA excision</keyword>
<keyword id="KW-0234">DNA repair</keyword>
<keyword id="KW-0235">DNA replication</keyword>
<keyword id="KW-0539">Nucleus</keyword>
<keyword id="KW-1185">Reference proteome</keyword>
<accession>Q5ZK28</accession>
<accession>F1P540</accession>
<comment type="function">
    <text evidence="1">Accessory component of both the DNA polymerase delta complex and the DNA polymerase zeta complex. As a component of the trimeric and tetrameric DNA polymerase delta complexes (Pol-delta3 and Pol-delta4, respectively), plays a role in high fidelity genome replication, including in lagging strand synthesis, and repair. Required for optimal Pol-delta activity. Stabilizes the Pol-delta complex and plays a major role in Pol-delta stimulation by PCNA. Pol-delta3 and Pol-delta4 are characterized by the absence or the presence of POLD4. They exhibit differences in catalytic activity. Most notably, Pol-delta3 shows higher proofreading activity than Pol-delta4. Although both Pol-delta3 and Pol-delta4 process Okazaki fragments in vitro, Pol-delta3 may also be better suited to fulfill this task, exhibiting near-absence of strand displacement activity compared to Pol-delta4 and stalling on encounter with the 5'-blocking oligonucleotides. Pol-delta3 idling process may avoid the formation of a gap, while maintaining a nick that can be readily ligated. Along with DNA polymerase kappa, DNA polymerase delta carries out approximately half of nucleotide excision repair (NER) synthesis following UV irradiation. In this context, POLD3, along with PCNA and RFC1-replication factor C complex, is required to recruit POLD1, the catalytic subunit of the polymerase delta complex, to DNA damage sites. Under conditions of DNA replication stress, required for the repair of broken replication forks through break-induced replication (BIR). Involved in the translesion synthesis (TLS) of templates carrying O6-methylguanine or abasic sites performed by Pol-delta4, independently of DNA polymerase zeta (REV3L) or eta (POLH). Facilitates abasic site bypass by DNA polymerase delta by promoting extension from the nucleotide inserted opposite the lesion. Also involved in TLS, as a component of the tetrameric DNA polymerase zeta complex. Along with POLD2, dramatically increases the efficiency and processivity of DNA synthesis of the DNA polymerase zeta complex compared to the minimal zeta complex, consisting of only REV3L and REV7.</text>
</comment>
<comment type="subunit">
    <text evidence="1">Component of both the DNA polymerase delta and DNA polymerase zeta complexes. The tetrameric DNA polymerase delta complex (Pol-delta4), which consists of POLD1/p125, POLD2/p50, POLD3/p66/p68 and POLD4/p12, with POLD1 bearing DNA polymerase and 3' to 5' proofreading exonuclease activities.</text>
</comment>
<comment type="subcellular location">
    <subcellularLocation>
        <location evidence="1">Cytoplasm</location>
    </subcellularLocation>
    <subcellularLocation>
        <location evidence="1">Nucleus</location>
    </subcellularLocation>
    <text evidence="1">Partially colocalizes with PCNA and POLD1 at S phase replication sites. Recruited to DNA damage sites within 2 hours following UV irradiation.</text>
</comment>
<comment type="domain">
    <text evidence="1">The PIP-box mediates the interaction with PCNA.</text>
</comment>
<comment type="sequence caution" evidence="3">
    <conflict type="frameshift">
        <sequence resource="EMBL-CDS" id="CAG31915"/>
    </conflict>
</comment>
<name>DPOD3_CHICK</name>
<dbReference type="EMBL" id="AJ720256">
    <property type="protein sequence ID" value="CAG31915.1"/>
    <property type="status" value="ALT_FRAME"/>
    <property type="molecule type" value="mRNA"/>
</dbReference>
<dbReference type="EMBL" id="AADN03001032">
    <property type="status" value="NOT_ANNOTATED_CDS"/>
    <property type="molecule type" value="Genomic_DNA"/>
</dbReference>
<dbReference type="RefSeq" id="NP_001006284.2">
    <property type="nucleotide sequence ID" value="NM_001006284.2"/>
</dbReference>
<dbReference type="SMR" id="Q5ZK28"/>
<dbReference type="FunCoup" id="Q5ZK28">
    <property type="interactions" value="1437"/>
</dbReference>
<dbReference type="STRING" id="9031.ENSGALP00000027913"/>
<dbReference type="GlyGen" id="Q5ZK28">
    <property type="glycosylation" value="1 site"/>
</dbReference>
<dbReference type="PaxDb" id="9031-ENSGALP00000027913"/>
<dbReference type="Ensembl" id="ENSGALT00000027966">
    <property type="protein sequence ID" value="ENSGALP00000027913"/>
    <property type="gene ID" value="ENSGALG00000017307"/>
</dbReference>
<dbReference type="GeneID" id="419053"/>
<dbReference type="KEGG" id="gga:419053"/>
<dbReference type="CTD" id="10714"/>
<dbReference type="VEuPathDB" id="HostDB:geneid_419053"/>
<dbReference type="eggNOG" id="ENOG502QPSW">
    <property type="taxonomic scope" value="Eukaryota"/>
</dbReference>
<dbReference type="InParanoid" id="Q5ZK28"/>
<dbReference type="OrthoDB" id="514823at2759"/>
<dbReference type="PhylomeDB" id="Q5ZK28"/>
<dbReference type="TreeFam" id="TF103006"/>
<dbReference type="Reactome" id="R-GGA-353416">
    <property type="pathway name" value="Resolution of Abasic Sites (AP sites)"/>
</dbReference>
<dbReference type="PRO" id="PR:Q5ZK28"/>
<dbReference type="Proteomes" id="UP000000539">
    <property type="component" value="Unassembled WGS sequence"/>
</dbReference>
<dbReference type="GO" id="GO:0005737">
    <property type="term" value="C:cytoplasm"/>
    <property type="evidence" value="ECO:0007669"/>
    <property type="project" value="UniProtKB-SubCell"/>
</dbReference>
<dbReference type="GO" id="GO:0043625">
    <property type="term" value="C:delta DNA polymerase complex"/>
    <property type="evidence" value="ECO:0007669"/>
    <property type="project" value="InterPro"/>
</dbReference>
<dbReference type="GO" id="GO:0005654">
    <property type="term" value="C:nucleoplasm"/>
    <property type="evidence" value="ECO:0000304"/>
    <property type="project" value="Reactome"/>
</dbReference>
<dbReference type="GO" id="GO:0071897">
    <property type="term" value="P:DNA biosynthetic process"/>
    <property type="evidence" value="ECO:0000250"/>
    <property type="project" value="UniProtKB"/>
</dbReference>
<dbReference type="GO" id="GO:0006281">
    <property type="term" value="P:DNA repair"/>
    <property type="evidence" value="ECO:0007669"/>
    <property type="project" value="UniProtKB-KW"/>
</dbReference>
<dbReference type="GO" id="GO:0006260">
    <property type="term" value="P:DNA replication"/>
    <property type="evidence" value="ECO:0007669"/>
    <property type="project" value="UniProtKB-KW"/>
</dbReference>
<dbReference type="FunFam" id="3.90.1030.20:FF:000001">
    <property type="entry name" value="DNA polymerase delta 3, accessory subunit"/>
    <property type="match status" value="1"/>
</dbReference>
<dbReference type="Gene3D" id="3.90.1030.20">
    <property type="entry name" value="DNA polymerase delta, p66 (Cdc27) subunit, wHTH domain"/>
    <property type="match status" value="1"/>
</dbReference>
<dbReference type="InterPro" id="IPR019038">
    <property type="entry name" value="POLD3"/>
</dbReference>
<dbReference type="InterPro" id="IPR041913">
    <property type="entry name" value="POLD3_sf"/>
</dbReference>
<dbReference type="PANTHER" id="PTHR17598">
    <property type="entry name" value="DNA POLYMERASE DELTA SUBUNIT 3"/>
    <property type="match status" value="1"/>
</dbReference>
<dbReference type="PANTHER" id="PTHR17598:SF13">
    <property type="entry name" value="DNA POLYMERASE DELTA SUBUNIT 3"/>
    <property type="match status" value="1"/>
</dbReference>
<dbReference type="Pfam" id="PF09507">
    <property type="entry name" value="CDC27"/>
    <property type="match status" value="1"/>
</dbReference>
<evidence type="ECO:0000250" key="1">
    <source>
        <dbReference type="UniProtKB" id="Q15054"/>
    </source>
</evidence>
<evidence type="ECO:0000256" key="2">
    <source>
        <dbReference type="SAM" id="MobiDB-lite"/>
    </source>
</evidence>
<evidence type="ECO:0000305" key="3"/>